<proteinExistence type="inferred from homology"/>
<feature type="chain" id="PRO_0000371883" description="NADH-quinone oxidoreductase subunit D">
    <location>
        <begin position="1"/>
        <end position="417"/>
    </location>
</feature>
<organism>
    <name type="scientific">Herminiimonas arsenicoxydans</name>
    <dbReference type="NCBI Taxonomy" id="204773"/>
    <lineage>
        <taxon>Bacteria</taxon>
        <taxon>Pseudomonadati</taxon>
        <taxon>Pseudomonadota</taxon>
        <taxon>Betaproteobacteria</taxon>
        <taxon>Burkholderiales</taxon>
        <taxon>Oxalobacteraceae</taxon>
        <taxon>Herminiimonas</taxon>
    </lineage>
</organism>
<reference key="1">
    <citation type="journal article" date="2007" name="PLoS Genet.">
        <title>A tale of two oxidation states: bacterial colonization of arsenic-rich environments.</title>
        <authorList>
            <person name="Muller D."/>
            <person name="Medigue C."/>
            <person name="Koechler S."/>
            <person name="Barbe V."/>
            <person name="Barakat M."/>
            <person name="Talla E."/>
            <person name="Bonnefoy V."/>
            <person name="Krin E."/>
            <person name="Arsene-Ploetze F."/>
            <person name="Carapito C."/>
            <person name="Chandler M."/>
            <person name="Cournoyer B."/>
            <person name="Cruveiller S."/>
            <person name="Dossat C."/>
            <person name="Duval S."/>
            <person name="Heymann M."/>
            <person name="Leize E."/>
            <person name="Lieutaud A."/>
            <person name="Lievremont D."/>
            <person name="Makita Y."/>
            <person name="Mangenot S."/>
            <person name="Nitschke W."/>
            <person name="Ortet P."/>
            <person name="Perdrial N."/>
            <person name="Schoepp B."/>
            <person name="Siguier P."/>
            <person name="Simeonova D.D."/>
            <person name="Rouy Z."/>
            <person name="Segurens B."/>
            <person name="Turlin E."/>
            <person name="Vallenet D."/>
            <person name="van Dorsselaer A."/>
            <person name="Weiss S."/>
            <person name="Weissenbach J."/>
            <person name="Lett M.-C."/>
            <person name="Danchin A."/>
            <person name="Bertin P.N."/>
        </authorList>
    </citation>
    <scope>NUCLEOTIDE SEQUENCE [LARGE SCALE GENOMIC DNA]</scope>
    <source>
        <strain>ULPAs1</strain>
    </source>
</reference>
<sequence length="417" mass="47728">MAEIKNYTLNFGPQHPAAHGVLRLVLELDGEVIQRADPHIGLLHRATEKLAEQKTYLQSVPYMDRLDYVSMMCNEHAYVMSIEKMLNLEVPLRAQYIRVMFDEITRILNHLMWLGAHALDVGAMGVFLYAFREREDLMDCYEAVSGARMHAAYYRPGGVYRDLPDAMPQHKASIIRNAKAINKLNENRQGSLLDFIEDFTNRFPTYVDEYETLLTDNRIWKQRLVGVGVVSPERAMAMGFTGPMLRGSGIEWDLRKKQPYEVYDLLDFDIPVGTNGDCYDRYLVRVEEMRQSNRIIKQCVEWLRNNPGSVMTDNHKVAPPSRVDMKSNMEDLIHHFKLFTEGFHVPVGEAYAAVEHPKGEFGVYLISDGANKPYRMKIRAPGFPHLQGLDEMAKGHMIADAVTIIGTQDIVFGEIDR</sequence>
<evidence type="ECO:0000255" key="1">
    <source>
        <dbReference type="HAMAP-Rule" id="MF_01358"/>
    </source>
</evidence>
<protein>
    <recommendedName>
        <fullName evidence="1">NADH-quinone oxidoreductase subunit D</fullName>
        <ecNumber evidence="1">7.1.1.-</ecNumber>
    </recommendedName>
    <alternativeName>
        <fullName evidence="1">NADH dehydrogenase I subunit D</fullName>
    </alternativeName>
    <alternativeName>
        <fullName evidence="1">NDH-1 subunit D</fullName>
    </alternativeName>
</protein>
<accession>A4G641</accession>
<gene>
    <name evidence="1" type="primary">nuoD</name>
    <name type="ordered locus">HEAR1823</name>
</gene>
<comment type="function">
    <text evidence="1">NDH-1 shuttles electrons from NADH, via FMN and iron-sulfur (Fe-S) centers, to quinones in the respiratory chain. The immediate electron acceptor for the enzyme in this species is believed to be ubiquinone. Couples the redox reaction to proton translocation (for every two electrons transferred, four hydrogen ions are translocated across the cytoplasmic membrane), and thus conserves the redox energy in a proton gradient.</text>
</comment>
<comment type="catalytic activity">
    <reaction evidence="1">
        <text>a quinone + NADH + 5 H(+)(in) = a quinol + NAD(+) + 4 H(+)(out)</text>
        <dbReference type="Rhea" id="RHEA:57888"/>
        <dbReference type="ChEBI" id="CHEBI:15378"/>
        <dbReference type="ChEBI" id="CHEBI:24646"/>
        <dbReference type="ChEBI" id="CHEBI:57540"/>
        <dbReference type="ChEBI" id="CHEBI:57945"/>
        <dbReference type="ChEBI" id="CHEBI:132124"/>
    </reaction>
</comment>
<comment type="subunit">
    <text evidence="1">NDH-1 is composed of 14 different subunits. Subunits NuoB, C, D, E, F, and G constitute the peripheral sector of the complex.</text>
</comment>
<comment type="subcellular location">
    <subcellularLocation>
        <location evidence="1">Cell inner membrane</location>
        <topology evidence="1">Peripheral membrane protein</topology>
        <orientation evidence="1">Cytoplasmic side</orientation>
    </subcellularLocation>
</comment>
<comment type="similarity">
    <text evidence="1">Belongs to the complex I 49 kDa subunit family.</text>
</comment>
<keyword id="KW-0997">Cell inner membrane</keyword>
<keyword id="KW-1003">Cell membrane</keyword>
<keyword id="KW-0472">Membrane</keyword>
<keyword id="KW-0520">NAD</keyword>
<keyword id="KW-0874">Quinone</keyword>
<keyword id="KW-1185">Reference proteome</keyword>
<keyword id="KW-1278">Translocase</keyword>
<keyword id="KW-0813">Transport</keyword>
<keyword id="KW-0830">Ubiquinone</keyword>
<name>NUOD_HERAR</name>
<dbReference type="EC" id="7.1.1.-" evidence="1"/>
<dbReference type="EMBL" id="CU207211">
    <property type="protein sequence ID" value="CAL61978.1"/>
    <property type="molecule type" value="Genomic_DNA"/>
</dbReference>
<dbReference type="SMR" id="A4G641"/>
<dbReference type="STRING" id="204773.HEAR1823"/>
<dbReference type="KEGG" id="har:HEAR1823"/>
<dbReference type="eggNOG" id="COG0649">
    <property type="taxonomic scope" value="Bacteria"/>
</dbReference>
<dbReference type="HOGENOM" id="CLU_015134_1_0_4"/>
<dbReference type="OrthoDB" id="9801496at2"/>
<dbReference type="Proteomes" id="UP000006697">
    <property type="component" value="Chromosome"/>
</dbReference>
<dbReference type="GO" id="GO:0005886">
    <property type="term" value="C:plasma membrane"/>
    <property type="evidence" value="ECO:0007669"/>
    <property type="project" value="UniProtKB-SubCell"/>
</dbReference>
<dbReference type="GO" id="GO:0051287">
    <property type="term" value="F:NAD binding"/>
    <property type="evidence" value="ECO:0007669"/>
    <property type="project" value="InterPro"/>
</dbReference>
<dbReference type="GO" id="GO:0050136">
    <property type="term" value="F:NADH:ubiquinone reductase (non-electrogenic) activity"/>
    <property type="evidence" value="ECO:0007669"/>
    <property type="project" value="UniProtKB-UniRule"/>
</dbReference>
<dbReference type="GO" id="GO:0048038">
    <property type="term" value="F:quinone binding"/>
    <property type="evidence" value="ECO:0007669"/>
    <property type="project" value="UniProtKB-KW"/>
</dbReference>
<dbReference type="FunFam" id="1.10.645.10:FF:000005">
    <property type="entry name" value="NADH-quinone oxidoreductase subunit D"/>
    <property type="match status" value="1"/>
</dbReference>
<dbReference type="Gene3D" id="1.10.645.10">
    <property type="entry name" value="Cytochrome-c3 Hydrogenase, chain B"/>
    <property type="match status" value="1"/>
</dbReference>
<dbReference type="HAMAP" id="MF_01358">
    <property type="entry name" value="NDH1_NuoD"/>
    <property type="match status" value="1"/>
</dbReference>
<dbReference type="InterPro" id="IPR001135">
    <property type="entry name" value="NADH_Q_OxRdtase_suD"/>
</dbReference>
<dbReference type="InterPro" id="IPR014029">
    <property type="entry name" value="NADH_UbQ_OxRdtase_49kDa_CS"/>
</dbReference>
<dbReference type="InterPro" id="IPR022885">
    <property type="entry name" value="NDH1_su_D/H"/>
</dbReference>
<dbReference type="InterPro" id="IPR029014">
    <property type="entry name" value="NiFe-Hase_large"/>
</dbReference>
<dbReference type="NCBIfam" id="TIGR01962">
    <property type="entry name" value="NuoD"/>
    <property type="match status" value="1"/>
</dbReference>
<dbReference type="NCBIfam" id="NF004739">
    <property type="entry name" value="PRK06075.1"/>
    <property type="match status" value="1"/>
</dbReference>
<dbReference type="PANTHER" id="PTHR11993:SF10">
    <property type="entry name" value="NADH DEHYDROGENASE [UBIQUINONE] IRON-SULFUR PROTEIN 2, MITOCHONDRIAL"/>
    <property type="match status" value="1"/>
</dbReference>
<dbReference type="PANTHER" id="PTHR11993">
    <property type="entry name" value="NADH-UBIQUINONE OXIDOREDUCTASE 49 KDA SUBUNIT"/>
    <property type="match status" value="1"/>
</dbReference>
<dbReference type="Pfam" id="PF00346">
    <property type="entry name" value="Complex1_49kDa"/>
    <property type="match status" value="2"/>
</dbReference>
<dbReference type="SUPFAM" id="SSF56762">
    <property type="entry name" value="HydB/Nqo4-like"/>
    <property type="match status" value="1"/>
</dbReference>
<dbReference type="PROSITE" id="PS00535">
    <property type="entry name" value="COMPLEX1_49K"/>
    <property type="match status" value="1"/>
</dbReference>